<protein>
    <recommendedName>
        <fullName evidence="4">Secreted RxLR effector protein 35</fullName>
    </recommendedName>
</protein>
<organism>
    <name type="scientific">Plasmopara viticola</name>
    <name type="common">Downy mildew of grapevine</name>
    <name type="synonym">Botrytis viticola</name>
    <dbReference type="NCBI Taxonomy" id="143451"/>
    <lineage>
        <taxon>Eukaryota</taxon>
        <taxon>Sar</taxon>
        <taxon>Stramenopiles</taxon>
        <taxon>Oomycota</taxon>
        <taxon>Peronosporales</taxon>
        <taxon>Peronosporaceae</taxon>
        <taxon>Plasmopara</taxon>
    </lineage>
</organism>
<gene>
    <name evidence="4" type="primary">RXLR35</name>
</gene>
<keyword id="KW-1048">Host nucleus</keyword>
<keyword id="KW-0964">Secreted</keyword>
<keyword id="KW-0732">Signal</keyword>
<keyword id="KW-0843">Virulence</keyword>
<feature type="signal peptide" evidence="1">
    <location>
        <begin position="1"/>
        <end position="22"/>
    </location>
</feature>
<feature type="chain" id="PRO_0000447913" description="Secreted RxLR effector protein 35">
    <location>
        <begin position="23"/>
        <end position="435"/>
    </location>
</feature>
<feature type="region of interest" description="Disordered" evidence="2">
    <location>
        <begin position="336"/>
        <end position="357"/>
    </location>
</feature>
<feature type="short sequence motif" description="RxLR-dEER" evidence="6">
    <location>
        <begin position="48"/>
        <end position="65"/>
    </location>
</feature>
<feature type="compositionally biased region" description="Polar residues" evidence="2">
    <location>
        <begin position="342"/>
        <end position="354"/>
    </location>
</feature>
<evidence type="ECO:0000255" key="1"/>
<evidence type="ECO:0000256" key="2">
    <source>
        <dbReference type="SAM" id="MobiDB-lite"/>
    </source>
</evidence>
<evidence type="ECO:0000269" key="3">
    <source>
    </source>
</evidence>
<evidence type="ECO:0000303" key="4">
    <source>
    </source>
</evidence>
<evidence type="ECO:0000305" key="5"/>
<evidence type="ECO:0000305" key="6">
    <source>
    </source>
</evidence>
<proteinExistence type="evidence at transcript level"/>
<sequence length="435" mass="48858">MRGAYYIIIALCVVASSQVAAGSDRQLQIYEHGVMPADNAVVKTLAKRFLRGSRVVHDDLANEERSFHPFLVDMIEEGIKEMSHAAEIVEEMPLAGKVVEEVPHATEGGQQKMDKGAEEAFEKHVEPSGHTATIQDTSRDISTQEVIQLSPHEWESDLSKLKPFVVLNKHRGRIEPVKDAFAAFCDEGLKPTTEETSIIWSMLGWNLARKPKGKHRQHLIAQARRGVLLDLRIVRMDESLWNKWMQLPKPLRMLKLNNLLNMHYQRWVHLFNIFQRRLSEIIGPPPKLKVAHGDTTDTSKALALHTHSNMQSSTPSEPLNAASTFKVERFVWGANRPKRTTDGNTGTISLPTKPTKTHRLKPLMPRLTESTTSSDLLVPTKRMRLSFGGTRSAFAPYKDPKEKLLAPSSTALTHKDIDLDLSLGGIYGKRTDKAL</sequence>
<accession>P0CV04</accession>
<dbReference type="SMR" id="P0CV04"/>
<dbReference type="GO" id="GO:0005576">
    <property type="term" value="C:extracellular region"/>
    <property type="evidence" value="ECO:0007669"/>
    <property type="project" value="UniProtKB-SubCell"/>
</dbReference>
<dbReference type="GO" id="GO:0042025">
    <property type="term" value="C:host cell nucleus"/>
    <property type="evidence" value="ECO:0007669"/>
    <property type="project" value="UniProtKB-SubCell"/>
</dbReference>
<name>RLR35_PLAVT</name>
<reference key="1">
    <citation type="journal article" date="2018" name="Front. Plant Sci.">
        <title>In planta functional analysis and subcellular localization of the oomycete pathogen Plasmopara viticola candidate RXLR effector repertoire.</title>
        <authorList>
            <person name="Liu Y."/>
            <person name="Lan X."/>
            <person name="Song S."/>
            <person name="Yin L."/>
            <person name="Dry I.B."/>
            <person name="Qu J."/>
            <person name="Xiang J."/>
            <person name="Lu J."/>
        </authorList>
    </citation>
    <scope>NUCLEOTIDE SEQUENCE [MRNA]</scope>
    <scope>DOMAIN</scope>
    <scope>FUNCTION</scope>
    <scope>SUBCELLULAR LOCATION</scope>
</reference>
<comment type="function">
    <text evidence="3">Secreted effector that acts as an elicitor that induces cell death in host plant cells.</text>
</comment>
<comment type="subcellular location">
    <subcellularLocation>
        <location evidence="3">Secreted</location>
    </subcellularLocation>
    <subcellularLocation>
        <location evidence="3">Host nucleus</location>
    </subcellularLocation>
</comment>
<comment type="domain">
    <text evidence="6">The RxLR-dEER motif acts to carry the protein into the host cell cytoplasm through binding to cell surface phosphatidylinositol-3-phosphate.</text>
</comment>
<comment type="similarity">
    <text evidence="5">Belongs to the RxLR effector family.</text>
</comment>